<accession>P9WG22</accession>
<accession>L0TB30</accession>
<accession>P96206</accession>
<accession>Q7D6E7</accession>
<gene>
    <name type="primary">drrB</name>
    <name type="ordered locus">MT3007</name>
</gene>
<proteinExistence type="inferred from homology"/>
<feature type="chain" id="PRO_0000428437" description="Doxorubicin resistance ABC transporter permease protein DrrB">
    <location>
        <begin position="1"/>
        <end position="289"/>
    </location>
</feature>
<feature type="transmembrane region" description="Helical" evidence="2">
    <location>
        <begin position="49"/>
        <end position="69"/>
    </location>
</feature>
<feature type="transmembrane region" description="Helical" evidence="2">
    <location>
        <begin position="88"/>
        <end position="108"/>
    </location>
</feature>
<feature type="transmembrane region" description="Helical" evidence="2">
    <location>
        <begin position="138"/>
        <end position="158"/>
    </location>
</feature>
<feature type="transmembrane region" description="Helical" evidence="2">
    <location>
        <begin position="166"/>
        <end position="186"/>
    </location>
</feature>
<feature type="transmembrane region" description="Helical" evidence="2">
    <location>
        <begin position="199"/>
        <end position="219"/>
    </location>
</feature>
<feature type="transmembrane region" description="Helical" evidence="2">
    <location>
        <begin position="266"/>
        <end position="286"/>
    </location>
</feature>
<feature type="domain" description="ABC transmembrane type-2">
    <location>
        <begin position="47"/>
        <end position="282"/>
    </location>
</feature>
<dbReference type="EMBL" id="AE000516">
    <property type="protein sequence ID" value="AAK47334.1"/>
    <property type="molecule type" value="Genomic_DNA"/>
</dbReference>
<dbReference type="PIR" id="E70984">
    <property type="entry name" value="E70984"/>
</dbReference>
<dbReference type="RefSeq" id="WP_003414848.1">
    <property type="nucleotide sequence ID" value="NZ_KK341227.1"/>
</dbReference>
<dbReference type="SMR" id="P9WG22"/>
<dbReference type="GeneID" id="45426925"/>
<dbReference type="KEGG" id="mtc:MT3007"/>
<dbReference type="PATRIC" id="fig|83331.31.peg.3247"/>
<dbReference type="HOGENOM" id="CLU_039483_2_0_11"/>
<dbReference type="Proteomes" id="UP000001020">
    <property type="component" value="Chromosome"/>
</dbReference>
<dbReference type="GO" id="GO:0043190">
    <property type="term" value="C:ATP-binding cassette (ABC) transporter complex"/>
    <property type="evidence" value="ECO:0007669"/>
    <property type="project" value="InterPro"/>
</dbReference>
<dbReference type="GO" id="GO:0140359">
    <property type="term" value="F:ABC-type transporter activity"/>
    <property type="evidence" value="ECO:0007669"/>
    <property type="project" value="InterPro"/>
</dbReference>
<dbReference type="GO" id="GO:0043215">
    <property type="term" value="P:daunorubicin transport"/>
    <property type="evidence" value="ECO:0007669"/>
    <property type="project" value="InterPro"/>
</dbReference>
<dbReference type="GO" id="GO:1900753">
    <property type="term" value="P:doxorubicin transport"/>
    <property type="evidence" value="ECO:0007669"/>
    <property type="project" value="InterPro"/>
</dbReference>
<dbReference type="GO" id="GO:0046677">
    <property type="term" value="P:response to antibiotic"/>
    <property type="evidence" value="ECO:0007669"/>
    <property type="project" value="UniProtKB-KW"/>
</dbReference>
<dbReference type="InterPro" id="IPR013525">
    <property type="entry name" value="ABC2_TM"/>
</dbReference>
<dbReference type="InterPro" id="IPR000412">
    <property type="entry name" value="ABC_2_transport"/>
</dbReference>
<dbReference type="InterPro" id="IPR004377">
    <property type="entry name" value="ABC_transpt_DrrB/DrrC"/>
</dbReference>
<dbReference type="InterPro" id="IPR051328">
    <property type="entry name" value="T7SS_ABC-Transporter"/>
</dbReference>
<dbReference type="NCBIfam" id="TIGR00025">
    <property type="entry name" value="Mtu_efflux"/>
    <property type="match status" value="1"/>
</dbReference>
<dbReference type="PANTHER" id="PTHR43077:SF8">
    <property type="entry name" value="DOXORUBICIN RESISTANCE ABC TRANSPORTER PERMEASE PROTEIN DRRB"/>
    <property type="match status" value="1"/>
</dbReference>
<dbReference type="PANTHER" id="PTHR43077">
    <property type="entry name" value="TRANSPORT PERMEASE YVFS-RELATED"/>
    <property type="match status" value="1"/>
</dbReference>
<dbReference type="Pfam" id="PF12698">
    <property type="entry name" value="ABC2_membrane_3"/>
    <property type="match status" value="1"/>
</dbReference>
<dbReference type="PIRSF" id="PIRSF006648">
    <property type="entry name" value="DrrB"/>
    <property type="match status" value="1"/>
</dbReference>
<organism>
    <name type="scientific">Mycobacterium tuberculosis (strain CDC 1551 / Oshkosh)</name>
    <dbReference type="NCBI Taxonomy" id="83331"/>
    <lineage>
        <taxon>Bacteria</taxon>
        <taxon>Bacillati</taxon>
        <taxon>Actinomycetota</taxon>
        <taxon>Actinomycetes</taxon>
        <taxon>Mycobacteriales</taxon>
        <taxon>Mycobacteriaceae</taxon>
        <taxon>Mycobacterium</taxon>
        <taxon>Mycobacterium tuberculosis complex</taxon>
    </lineage>
</organism>
<reference key="1">
    <citation type="journal article" date="2002" name="J. Bacteriol.">
        <title>Whole-genome comparison of Mycobacterium tuberculosis clinical and laboratory strains.</title>
        <authorList>
            <person name="Fleischmann R.D."/>
            <person name="Alland D."/>
            <person name="Eisen J.A."/>
            <person name="Carpenter L."/>
            <person name="White O."/>
            <person name="Peterson J.D."/>
            <person name="DeBoy R.T."/>
            <person name="Dodson R.J."/>
            <person name="Gwinn M.L."/>
            <person name="Haft D.H."/>
            <person name="Hickey E.K."/>
            <person name="Kolonay J.F."/>
            <person name="Nelson W.C."/>
            <person name="Umayam L.A."/>
            <person name="Ermolaeva M.D."/>
            <person name="Salzberg S.L."/>
            <person name="Delcher A."/>
            <person name="Utterback T.R."/>
            <person name="Weidman J.F."/>
            <person name="Khouri H.M."/>
            <person name="Gill J."/>
            <person name="Mikula A."/>
            <person name="Bishai W."/>
            <person name="Jacobs W.R. Jr."/>
            <person name="Venter J.C."/>
            <person name="Fraser C.M."/>
        </authorList>
    </citation>
    <scope>NUCLEOTIDE SEQUENCE [LARGE SCALE GENOMIC DNA]</scope>
    <source>
        <strain>CDC 1551 / Oshkosh</strain>
    </source>
</reference>
<evidence type="ECO:0000250" key="1"/>
<evidence type="ECO:0000255" key="2"/>
<evidence type="ECO:0000305" key="3"/>
<name>DRRB_MYCTO</name>
<comment type="function">
    <text evidence="1">Part of the ABC transporter complex DrrABC involved in doxorubicin resistance. Probably responsible for the translocation of the substrate across the membrane (By similarity).</text>
</comment>
<comment type="subunit">
    <text evidence="3">The complex is composed of two ATP-binding proteins (DrrA) and two transmembrane proteins (DrrB and DrrC).</text>
</comment>
<comment type="subcellular location">
    <subcellularLocation>
        <location evidence="1">Cell membrane</location>
        <topology evidence="1">Multi-pass membrane protein</topology>
    </subcellularLocation>
</comment>
<comment type="similarity">
    <text evidence="3">Belongs to the ABC-2 integral membrane protein family.</text>
</comment>
<keyword id="KW-0046">Antibiotic resistance</keyword>
<keyword id="KW-1003">Cell membrane</keyword>
<keyword id="KW-0472">Membrane</keyword>
<keyword id="KW-1185">Reference proteome</keyword>
<keyword id="KW-0812">Transmembrane</keyword>
<keyword id="KW-1133">Transmembrane helix</keyword>
<keyword id="KW-0813">Transport</keyword>
<protein>
    <recommendedName>
        <fullName>Doxorubicin resistance ABC transporter permease protein DrrB</fullName>
    </recommendedName>
</protein>
<sequence>MSGPAIDASPALTFNQSSASIQQRRLSTGRQMWVLYRRFAAPSLLNGEVLTTVGAPIIFMVGFYIPFAIPWNQFVGGASSGVASNLGQYITPLVTLQAVSFAAIGSGFRAATDSLLGVNRRFQSMPMAPLTPLLARVWVAVDRCFTGLVISLVCGYVIGFRFHRGALYIVGFCLLVIAIGAVLSFAADLVGTVTRNPDAMLPLLSLPILIFGLLSIGLMPLKLFPHWIHPFVRNQPISQFVAALRALAGDTTKTASQVSWPVMAPTLTWLFAFVVILALSSTIVLARRP</sequence>